<gene>
    <name type="primary">Mcm3</name>
    <name type="synonym">Mcm3-RA</name>
    <name type="ORF">CG4206</name>
</gene>
<name>MCM3_DROME</name>
<proteinExistence type="evidence at protein level"/>
<sequence length="819" mass="90918">MAHEGEQFIKDIQREYVDFLDDEEDQGIYAGHVKDMIAEKSKRLIVNVNDLKRKNPQRALGLLSNAADEQLAFGRALKEYASTVDPGYAKMHEDLFVGFEGCFGNRHVTPRSLTSIYLGNMVCVEGIVTKVSLIRPKVVRSVHYCPNTRKVMERKYTDLTSFEAVPSGAAYPTKDEDGNLLETEYGLSVYKDHQTLTIQEMPEKAPAGQLPRSVDIVCDDDLVDRCKPGDRVQIVGSYRCLPGKRGGYTSGTFRTVLLANNISLLSKESNLDISREDIMLCKKLAKNNDIFELLSKSLAPSIHGHAYVKQAILCLLLGGVEKILPNGTRLRGDINVLLIGDPSVAKSQLLRYVLNTAPRAIPTTGRGSSGVGLTAAVTTDQETGERRLEAGAMVLADRGVVCIDEFDKMSDIDRTAIHEVMEQGRVTISKAGIHASLNARCSVLAAANPVYGRYDQYKTPMENIGLQDSLLSRFDLLFVMLDVIDSDVDQMISDHVVRMHRYRNPKEADGEPLSMGSSYADSLSFVSSSEEKKDTEVYEKYDALLHGKSRQRHEKILSVEFMRKYIHIAKCMKPKLGEQACEAIANEYSRLRSQEAVETDVARTQPITARTLETLIRLSTAHARARMSKSVTIDDAHAAIELVQFAYFKKVLDKDRPSKRRRNSGSDAEDDNGEASSQRSPSRRSKRTRTATVGADSDEEDIEPPQPDAGDLTRRETRRSLPARSVAMLMASPSSEEQSVATSTTEPAIISDARLGEFKNNLQRLFREAREQSLALARITTAINVGSQEPFTAGEIEAAVHRMTEDNQIMVADDIVFLI</sequence>
<comment type="function">
    <text evidence="3 6">Acts as a component of the Mcm2-7 complex (Mcm complex) (Mcm complex) which is the putative replicative helicase essential for 'once per cell cycle' DNA replication initiation and elongation in eukaryotic cells. Core component of CDC45-MCM-GINS (CMG) helicase, the molecular machine that unwinds template DNA during replication, and around which the replisome is built. The active ATPase sites in the Mcm2-7 ring are formed through the interaction surfaces of two neighboring subunits such that a critical structure of a conserved arginine finger motif is provided in trans relative to the ATP-binding site of the Walker A box of the adjacent subunit. The six ATPase active sites, however, are likely to contribute differentially to the complex helicase activity.</text>
</comment>
<comment type="catalytic activity">
    <reaction evidence="1">
        <text>ATP + H2O = ADP + phosphate + H(+)</text>
        <dbReference type="Rhea" id="RHEA:13065"/>
        <dbReference type="ChEBI" id="CHEBI:15377"/>
        <dbReference type="ChEBI" id="CHEBI:15378"/>
        <dbReference type="ChEBI" id="CHEBI:30616"/>
        <dbReference type="ChEBI" id="CHEBI:43474"/>
        <dbReference type="ChEBI" id="CHEBI:456216"/>
        <dbReference type="EC" id="3.6.4.12"/>
    </reaction>
    <physiologicalReaction direction="left-to-right" evidence="1">
        <dbReference type="Rhea" id="RHEA:13066"/>
    </physiologicalReaction>
</comment>
<comment type="subunit">
    <text evidence="3 7">Component of the Mcm2-7 complex. The complex forms a toroidal hexameric ring with the proposed subunit order Mcm2-Mcm6-Mcm4-Mcm7-Mcm3-Mcm5 (Probable).</text>
</comment>
<comment type="interaction">
    <interactant intactId="EBI-103930">
        <id>Q9XYU1</id>
    </interactant>
    <interactant intactId="EBI-83298">
        <id>Q9VGW6</id>
        <label>Mcm5</label>
    </interactant>
    <organismsDiffer>false</organismsDiffer>
    <experiments>8</experiments>
</comment>
<comment type="subcellular location">
    <subcellularLocation>
        <location evidence="1">Nucleus</location>
    </subcellularLocation>
    <subcellularLocation>
        <location evidence="1">Chromosome</location>
    </subcellularLocation>
    <text evidence="1">Associated with chromatin before the formation of nuclei and detaches from it as DNA replication progresses.</text>
</comment>
<comment type="similarity">
    <text evidence="7">Belongs to the MCM family.</text>
</comment>
<protein>
    <recommendedName>
        <fullName>DNA replication licensing factor Mcm3</fullName>
        <ecNumber>3.6.4.12</ecNumber>
    </recommendedName>
    <alternativeName>
        <fullName>Minichromosome maintenance 3 protein</fullName>
        <shortName>DmMCM3</shortName>
    </alternativeName>
</protein>
<keyword id="KW-0002">3D-structure</keyword>
<keyword id="KW-0067">ATP-binding</keyword>
<keyword id="KW-0131">Cell cycle</keyword>
<keyword id="KW-0158">Chromosome</keyword>
<keyword id="KW-0235">DNA replication</keyword>
<keyword id="KW-0238">DNA-binding</keyword>
<keyword id="KW-0347">Helicase</keyword>
<keyword id="KW-0378">Hydrolase</keyword>
<keyword id="KW-0547">Nucleotide-binding</keyword>
<keyword id="KW-0539">Nucleus</keyword>
<keyword id="KW-0597">Phosphoprotein</keyword>
<keyword id="KW-1185">Reference proteome</keyword>
<evidence type="ECO:0000250" key="1">
    <source>
        <dbReference type="UniProtKB" id="P25205"/>
    </source>
</evidence>
<evidence type="ECO:0000256" key="2">
    <source>
        <dbReference type="SAM" id="MobiDB-lite"/>
    </source>
</evidence>
<evidence type="ECO:0000269" key="3">
    <source>
    </source>
</evidence>
<evidence type="ECO:0000269" key="4">
    <source>
    </source>
</evidence>
<evidence type="ECO:0000269" key="5">
    <source>
    </source>
</evidence>
<evidence type="ECO:0000269" key="6">
    <source>
    </source>
</evidence>
<evidence type="ECO:0000305" key="7"/>
<organism>
    <name type="scientific">Drosophila melanogaster</name>
    <name type="common">Fruit fly</name>
    <dbReference type="NCBI Taxonomy" id="7227"/>
    <lineage>
        <taxon>Eukaryota</taxon>
        <taxon>Metazoa</taxon>
        <taxon>Ecdysozoa</taxon>
        <taxon>Arthropoda</taxon>
        <taxon>Hexapoda</taxon>
        <taxon>Insecta</taxon>
        <taxon>Pterygota</taxon>
        <taxon>Neoptera</taxon>
        <taxon>Endopterygota</taxon>
        <taxon>Diptera</taxon>
        <taxon>Brachycera</taxon>
        <taxon>Muscomorpha</taxon>
        <taxon>Ephydroidea</taxon>
        <taxon>Drosophilidae</taxon>
        <taxon>Drosophila</taxon>
        <taxon>Sophophora</taxon>
    </lineage>
</organism>
<reference key="1">
    <citation type="journal article" date="1998" name="Gene">
        <title>cDNA cloning and expression during development of Drosophila melanogaster MCM3, MCM6 and MCM7.</title>
        <authorList>
            <person name="Ohno K."/>
            <person name="Hirose F."/>
            <person name="Inoue Y.H."/>
            <person name="Takisawa H."/>
            <person name="Mimura S."/>
            <person name="Hashimoto Y."/>
            <person name="Kiyono T."/>
            <person name="Nishida Y."/>
            <person name="Matsukage A."/>
        </authorList>
    </citation>
    <scope>NUCLEOTIDE SEQUENCE [MRNA]</scope>
</reference>
<reference key="2">
    <citation type="journal article" date="1999" name="Gene">
        <title>Identification and complete cDNA sequence of the missing Drosophila MCMs: DmMCM3, DmMCM6 and DmMCM7.</title>
        <authorList>
            <person name="Feger G."/>
        </authorList>
    </citation>
    <scope>NUCLEOTIDE SEQUENCE [MRNA]</scope>
</reference>
<reference key="3">
    <citation type="journal article" date="2000" name="Science">
        <title>The genome sequence of Drosophila melanogaster.</title>
        <authorList>
            <person name="Adams M.D."/>
            <person name="Celniker S.E."/>
            <person name="Holt R.A."/>
            <person name="Evans C.A."/>
            <person name="Gocayne J.D."/>
            <person name="Amanatides P.G."/>
            <person name="Scherer S.E."/>
            <person name="Li P.W."/>
            <person name="Hoskins R.A."/>
            <person name="Galle R.F."/>
            <person name="George R.A."/>
            <person name="Lewis S.E."/>
            <person name="Richards S."/>
            <person name="Ashburner M."/>
            <person name="Henderson S.N."/>
            <person name="Sutton G.G."/>
            <person name="Wortman J.R."/>
            <person name="Yandell M.D."/>
            <person name="Zhang Q."/>
            <person name="Chen L.X."/>
            <person name="Brandon R.C."/>
            <person name="Rogers Y.-H.C."/>
            <person name="Blazej R.G."/>
            <person name="Champe M."/>
            <person name="Pfeiffer B.D."/>
            <person name="Wan K.H."/>
            <person name="Doyle C."/>
            <person name="Baxter E.G."/>
            <person name="Helt G."/>
            <person name="Nelson C.R."/>
            <person name="Miklos G.L.G."/>
            <person name="Abril J.F."/>
            <person name="Agbayani A."/>
            <person name="An H.-J."/>
            <person name="Andrews-Pfannkoch C."/>
            <person name="Baldwin D."/>
            <person name="Ballew R.M."/>
            <person name="Basu A."/>
            <person name="Baxendale J."/>
            <person name="Bayraktaroglu L."/>
            <person name="Beasley E.M."/>
            <person name="Beeson K.Y."/>
            <person name="Benos P.V."/>
            <person name="Berman B.P."/>
            <person name="Bhandari D."/>
            <person name="Bolshakov S."/>
            <person name="Borkova D."/>
            <person name="Botchan M.R."/>
            <person name="Bouck J."/>
            <person name="Brokstein P."/>
            <person name="Brottier P."/>
            <person name="Burtis K.C."/>
            <person name="Busam D.A."/>
            <person name="Butler H."/>
            <person name="Cadieu E."/>
            <person name="Center A."/>
            <person name="Chandra I."/>
            <person name="Cherry J.M."/>
            <person name="Cawley S."/>
            <person name="Dahlke C."/>
            <person name="Davenport L.B."/>
            <person name="Davies P."/>
            <person name="de Pablos B."/>
            <person name="Delcher A."/>
            <person name="Deng Z."/>
            <person name="Mays A.D."/>
            <person name="Dew I."/>
            <person name="Dietz S.M."/>
            <person name="Dodson K."/>
            <person name="Doup L.E."/>
            <person name="Downes M."/>
            <person name="Dugan-Rocha S."/>
            <person name="Dunkov B.C."/>
            <person name="Dunn P."/>
            <person name="Durbin K.J."/>
            <person name="Evangelista C.C."/>
            <person name="Ferraz C."/>
            <person name="Ferriera S."/>
            <person name="Fleischmann W."/>
            <person name="Fosler C."/>
            <person name="Gabrielian A.E."/>
            <person name="Garg N.S."/>
            <person name="Gelbart W.M."/>
            <person name="Glasser K."/>
            <person name="Glodek A."/>
            <person name="Gong F."/>
            <person name="Gorrell J.H."/>
            <person name="Gu Z."/>
            <person name="Guan P."/>
            <person name="Harris M."/>
            <person name="Harris N.L."/>
            <person name="Harvey D.A."/>
            <person name="Heiman T.J."/>
            <person name="Hernandez J.R."/>
            <person name="Houck J."/>
            <person name="Hostin D."/>
            <person name="Houston K.A."/>
            <person name="Howland T.J."/>
            <person name="Wei M.-H."/>
            <person name="Ibegwam C."/>
            <person name="Jalali M."/>
            <person name="Kalush F."/>
            <person name="Karpen G.H."/>
            <person name="Ke Z."/>
            <person name="Kennison J.A."/>
            <person name="Ketchum K.A."/>
            <person name="Kimmel B.E."/>
            <person name="Kodira C.D."/>
            <person name="Kraft C.L."/>
            <person name="Kravitz S."/>
            <person name="Kulp D."/>
            <person name="Lai Z."/>
            <person name="Lasko P."/>
            <person name="Lei Y."/>
            <person name="Levitsky A.A."/>
            <person name="Li J.H."/>
            <person name="Li Z."/>
            <person name="Liang Y."/>
            <person name="Lin X."/>
            <person name="Liu X."/>
            <person name="Mattei B."/>
            <person name="McIntosh T.C."/>
            <person name="McLeod M.P."/>
            <person name="McPherson D."/>
            <person name="Merkulov G."/>
            <person name="Milshina N.V."/>
            <person name="Mobarry C."/>
            <person name="Morris J."/>
            <person name="Moshrefi A."/>
            <person name="Mount S.M."/>
            <person name="Moy M."/>
            <person name="Murphy B."/>
            <person name="Murphy L."/>
            <person name="Muzny D.M."/>
            <person name="Nelson D.L."/>
            <person name="Nelson D.R."/>
            <person name="Nelson K.A."/>
            <person name="Nixon K."/>
            <person name="Nusskern D.R."/>
            <person name="Pacleb J.M."/>
            <person name="Palazzolo M."/>
            <person name="Pittman G.S."/>
            <person name="Pan S."/>
            <person name="Pollard J."/>
            <person name="Puri V."/>
            <person name="Reese M.G."/>
            <person name="Reinert K."/>
            <person name="Remington K."/>
            <person name="Saunders R.D.C."/>
            <person name="Scheeler F."/>
            <person name="Shen H."/>
            <person name="Shue B.C."/>
            <person name="Siden-Kiamos I."/>
            <person name="Simpson M."/>
            <person name="Skupski M.P."/>
            <person name="Smith T.J."/>
            <person name="Spier E."/>
            <person name="Spradling A.C."/>
            <person name="Stapleton M."/>
            <person name="Strong R."/>
            <person name="Sun E."/>
            <person name="Svirskas R."/>
            <person name="Tector C."/>
            <person name="Turner R."/>
            <person name="Venter E."/>
            <person name="Wang A.H."/>
            <person name="Wang X."/>
            <person name="Wang Z.-Y."/>
            <person name="Wassarman D.A."/>
            <person name="Weinstock G.M."/>
            <person name="Weissenbach J."/>
            <person name="Williams S.M."/>
            <person name="Woodage T."/>
            <person name="Worley K.C."/>
            <person name="Wu D."/>
            <person name="Yang S."/>
            <person name="Yao Q.A."/>
            <person name="Ye J."/>
            <person name="Yeh R.-F."/>
            <person name="Zaveri J.S."/>
            <person name="Zhan M."/>
            <person name="Zhang G."/>
            <person name="Zhao Q."/>
            <person name="Zheng L."/>
            <person name="Zheng X.H."/>
            <person name="Zhong F.N."/>
            <person name="Zhong W."/>
            <person name="Zhou X."/>
            <person name="Zhu S.C."/>
            <person name="Zhu X."/>
            <person name="Smith H.O."/>
            <person name="Gibbs R.A."/>
            <person name="Myers E.W."/>
            <person name="Rubin G.M."/>
            <person name="Venter J.C."/>
        </authorList>
    </citation>
    <scope>NUCLEOTIDE SEQUENCE [LARGE SCALE GENOMIC DNA]</scope>
    <source>
        <strain>Berkeley</strain>
    </source>
</reference>
<reference key="4">
    <citation type="journal article" date="2002" name="Genome Biol.">
        <title>Annotation of the Drosophila melanogaster euchromatic genome: a systematic review.</title>
        <authorList>
            <person name="Misra S."/>
            <person name="Crosby M.A."/>
            <person name="Mungall C.J."/>
            <person name="Matthews B.B."/>
            <person name="Campbell K.S."/>
            <person name="Hradecky P."/>
            <person name="Huang Y."/>
            <person name="Kaminker J.S."/>
            <person name="Millburn G.H."/>
            <person name="Prochnik S.E."/>
            <person name="Smith C.D."/>
            <person name="Tupy J.L."/>
            <person name="Whitfield E.J."/>
            <person name="Bayraktaroglu L."/>
            <person name="Berman B.P."/>
            <person name="Bettencourt B.R."/>
            <person name="Celniker S.E."/>
            <person name="de Grey A.D.N.J."/>
            <person name="Drysdale R.A."/>
            <person name="Harris N.L."/>
            <person name="Richter J."/>
            <person name="Russo S."/>
            <person name="Schroeder A.J."/>
            <person name="Shu S.Q."/>
            <person name="Stapleton M."/>
            <person name="Yamada C."/>
            <person name="Ashburner M."/>
            <person name="Gelbart W.M."/>
            <person name="Rubin G.M."/>
            <person name="Lewis S.E."/>
        </authorList>
    </citation>
    <scope>GENOME REANNOTATION</scope>
    <source>
        <strain>Berkeley</strain>
    </source>
</reference>
<reference key="5">
    <citation type="submission" date="2008-10" db="EMBL/GenBank/DDBJ databases">
        <authorList>
            <person name="Carlson J."/>
            <person name="Booth B."/>
            <person name="Frise E."/>
            <person name="Park S."/>
            <person name="Wan K."/>
            <person name="Yu C."/>
            <person name="Celniker S."/>
        </authorList>
    </citation>
    <scope>NUCLEOTIDE SEQUENCE [LARGE SCALE MRNA]</scope>
    <source>
        <strain>Berkeley</strain>
    </source>
</reference>
<reference key="6">
    <citation type="journal article" date="2006" name="Proc. Natl. Acad. Sci. U.S.A.">
        <title>Isolation of the Cdc45/Mcm2-7/GINS (CMG) complex, a candidate for the eukaryotic DNA replication fork helicase.</title>
        <authorList>
            <person name="Moyer S.E."/>
            <person name="Lewis P.W."/>
            <person name="Botchan M.R."/>
        </authorList>
    </citation>
    <scope>IDENTIFICATION IN THE MCM2-7 COMPLEX</scope>
    <scope>FUNCTION OF THE MCM2-7 COMPLEX</scope>
</reference>
<reference key="7">
    <citation type="journal article" date="2007" name="Mol. Biosyst.">
        <title>An integrated chemical, mass spectrometric and computational strategy for (quantitative) phosphoproteomics: application to Drosophila melanogaster Kc167 cells.</title>
        <authorList>
            <person name="Bodenmiller B."/>
            <person name="Mueller L.N."/>
            <person name="Pedrioli P.G.A."/>
            <person name="Pflieger D."/>
            <person name="Juenger M.A."/>
            <person name="Eng J.K."/>
            <person name="Aebersold R."/>
            <person name="Tao W.A."/>
        </authorList>
    </citation>
    <scope>PHOSPHORYLATION [LARGE SCALE ANALYSIS] AT SER-697; SER-735 AND SER-739</scope>
    <scope>IDENTIFICATION BY MASS SPECTROMETRY</scope>
</reference>
<reference key="8">
    <citation type="journal article" date="2008" name="J. Proteome Res.">
        <title>Phosphoproteome analysis of Drosophila melanogaster embryos.</title>
        <authorList>
            <person name="Zhai B."/>
            <person name="Villen J."/>
            <person name="Beausoleil S.A."/>
            <person name="Mintseris J."/>
            <person name="Gygi S.P."/>
        </authorList>
    </citation>
    <scope>PHOSPHORYLATION [LARGE SCALE ANALYSIS] AT SER-522; TYR-538; SER-664; SER-666; SER-680; SER-682; THR-690; THR-692 AND SER-697</scope>
    <scope>IDENTIFICATION BY MASS SPECTROMETRY</scope>
    <source>
        <tissue>Embryo</tissue>
    </source>
</reference>
<reference key="9">
    <citation type="journal article" date="2010" name="Mol. Cell">
        <title>Activation of the MCM2-7 helicase by association with Cdc45 and GINS proteins.</title>
        <authorList>
            <person name="Ilves I."/>
            <person name="Petojevic T."/>
            <person name="Pesavento J.J."/>
            <person name="Botchan M.R."/>
        </authorList>
    </citation>
    <scope>RECONSTITUTION OF THE MCM2-7 COMPLEX</scope>
    <scope>FUNCTION OF THE MCM2-7 COMPLEX</scope>
    <scope>MUTAGENESIS OF LYS-346</scope>
</reference>
<accession>Q9XYU1</accession>
<accession>P91675</accession>
<dbReference type="EC" id="3.6.4.12"/>
<dbReference type="EMBL" id="AB010107">
    <property type="protein sequence ID" value="BAA34731.1"/>
    <property type="molecule type" value="mRNA"/>
</dbReference>
<dbReference type="EMBL" id="AF124745">
    <property type="protein sequence ID" value="AAD32859.1"/>
    <property type="molecule type" value="mRNA"/>
</dbReference>
<dbReference type="EMBL" id="AE014298">
    <property type="protein sequence ID" value="AAF46023.1"/>
    <property type="molecule type" value="Genomic_DNA"/>
</dbReference>
<dbReference type="EMBL" id="BT046156">
    <property type="protein sequence ID" value="ACI46544.1"/>
    <property type="molecule type" value="mRNA"/>
</dbReference>
<dbReference type="RefSeq" id="NP_511048.2">
    <property type="nucleotide sequence ID" value="NM_078493.4"/>
</dbReference>
<dbReference type="PDB" id="6RAW">
    <property type="method" value="EM"/>
    <property type="resolution" value="3.70 A"/>
    <property type="chains" value="3=1-819"/>
</dbReference>
<dbReference type="PDB" id="6RAX">
    <property type="method" value="EM"/>
    <property type="resolution" value="3.99 A"/>
    <property type="chains" value="3=1-819"/>
</dbReference>
<dbReference type="PDB" id="6RAY">
    <property type="method" value="EM"/>
    <property type="resolution" value="4.28 A"/>
    <property type="chains" value="3=1-819"/>
</dbReference>
<dbReference type="PDB" id="6RAZ">
    <property type="method" value="EM"/>
    <property type="resolution" value="4.46 A"/>
    <property type="chains" value="3=1-819"/>
</dbReference>
<dbReference type="PDBsum" id="6RAW"/>
<dbReference type="PDBsum" id="6RAX"/>
<dbReference type="PDBsum" id="6RAY"/>
<dbReference type="PDBsum" id="6RAZ"/>
<dbReference type="EMDB" id="EMD-2772"/>
<dbReference type="EMDB" id="EMD-3318"/>
<dbReference type="EMDB" id="EMD-3319"/>
<dbReference type="EMDB" id="EMD-3320"/>
<dbReference type="EMDB" id="EMD-3321"/>
<dbReference type="EMDB" id="EMD-4785"/>
<dbReference type="EMDB" id="EMD-4786"/>
<dbReference type="EMDB" id="EMD-4787"/>
<dbReference type="EMDB" id="EMD-4788"/>
<dbReference type="SMR" id="Q9XYU1"/>
<dbReference type="BioGRID" id="57959">
    <property type="interactions" value="14"/>
</dbReference>
<dbReference type="ComplexPortal" id="CPX-2942">
    <property type="entry name" value="MCM complex"/>
</dbReference>
<dbReference type="FunCoup" id="Q9XYU1">
    <property type="interactions" value="1243"/>
</dbReference>
<dbReference type="IntAct" id="Q9XYU1">
    <property type="interactions" value="12"/>
</dbReference>
<dbReference type="STRING" id="7227.FBpp0070729"/>
<dbReference type="GlyGen" id="Q9XYU1">
    <property type="glycosylation" value="1 site"/>
</dbReference>
<dbReference type="iPTMnet" id="Q9XYU1"/>
<dbReference type="PaxDb" id="7227-FBpp0070729"/>
<dbReference type="EnsemblMetazoa" id="FBtr0070762">
    <property type="protein sequence ID" value="FBpp0070729"/>
    <property type="gene ID" value="FBgn0284442"/>
</dbReference>
<dbReference type="GeneID" id="31449"/>
<dbReference type="KEGG" id="dme:Dmel_CG4206"/>
<dbReference type="UCSC" id="CG4206-RA">
    <property type="organism name" value="d. melanogaster"/>
</dbReference>
<dbReference type="AGR" id="FB:FBgn0284442"/>
<dbReference type="CTD" id="4172"/>
<dbReference type="FlyBase" id="FBgn0284442">
    <property type="gene designation" value="Mcm3"/>
</dbReference>
<dbReference type="VEuPathDB" id="VectorBase:FBgn0284442"/>
<dbReference type="eggNOG" id="KOG0479">
    <property type="taxonomic scope" value="Eukaryota"/>
</dbReference>
<dbReference type="GeneTree" id="ENSGT01050000244824"/>
<dbReference type="InParanoid" id="Q9XYU1"/>
<dbReference type="OMA" id="NVYPQED"/>
<dbReference type="OrthoDB" id="1882346at2759"/>
<dbReference type="PhylomeDB" id="Q9XYU1"/>
<dbReference type="Reactome" id="R-DME-176187">
    <property type="pathway name" value="Activation of ATR in response to replication stress"/>
</dbReference>
<dbReference type="Reactome" id="R-DME-68867">
    <property type="pathway name" value="Assembly of the pre-replicative complex"/>
</dbReference>
<dbReference type="Reactome" id="R-DME-68949">
    <property type="pathway name" value="Orc1 removal from chromatin"/>
</dbReference>
<dbReference type="Reactome" id="R-DME-68962">
    <property type="pathway name" value="Activation of the pre-replicative complex"/>
</dbReference>
<dbReference type="Reactome" id="R-DME-69052">
    <property type="pathway name" value="Switching of origins to a post-replicative state"/>
</dbReference>
<dbReference type="BioGRID-ORCS" id="31449">
    <property type="hits" value="0 hits in 1 CRISPR screen"/>
</dbReference>
<dbReference type="GenomeRNAi" id="31449"/>
<dbReference type="PRO" id="PR:Q9XYU1"/>
<dbReference type="Proteomes" id="UP000000803">
    <property type="component" value="Chromosome X"/>
</dbReference>
<dbReference type="Bgee" id="FBgn0284442">
    <property type="expression patterns" value="Expressed in secondary oocyte and 46 other cell types or tissues"/>
</dbReference>
<dbReference type="ExpressionAtlas" id="Q9XYU1">
    <property type="expression patterns" value="baseline and differential"/>
</dbReference>
<dbReference type="GO" id="GO:0071162">
    <property type="term" value="C:CMG complex"/>
    <property type="evidence" value="ECO:0000314"/>
    <property type="project" value="FlyBase"/>
</dbReference>
<dbReference type="GO" id="GO:0042555">
    <property type="term" value="C:MCM complex"/>
    <property type="evidence" value="ECO:0000314"/>
    <property type="project" value="FlyBase"/>
</dbReference>
<dbReference type="GO" id="GO:0005634">
    <property type="term" value="C:nucleus"/>
    <property type="evidence" value="ECO:0000318"/>
    <property type="project" value="GO_Central"/>
</dbReference>
<dbReference type="GO" id="GO:0005524">
    <property type="term" value="F:ATP binding"/>
    <property type="evidence" value="ECO:0007669"/>
    <property type="project" value="UniProtKB-KW"/>
</dbReference>
<dbReference type="GO" id="GO:0016887">
    <property type="term" value="F:ATP hydrolysis activity"/>
    <property type="evidence" value="ECO:0007669"/>
    <property type="project" value="InterPro"/>
</dbReference>
<dbReference type="GO" id="GO:0004386">
    <property type="term" value="F:helicase activity"/>
    <property type="evidence" value="ECO:0007669"/>
    <property type="project" value="UniProtKB-KW"/>
</dbReference>
<dbReference type="GO" id="GO:0003697">
    <property type="term" value="F:single-stranded DNA binding"/>
    <property type="evidence" value="ECO:0000318"/>
    <property type="project" value="GO_Central"/>
</dbReference>
<dbReference type="GO" id="GO:0006271">
    <property type="term" value="P:DNA strand elongation involved in DNA replication"/>
    <property type="evidence" value="ECO:0000318"/>
    <property type="project" value="GO_Central"/>
</dbReference>
<dbReference type="GO" id="GO:0000727">
    <property type="term" value="P:double-strand break repair via break-induced replication"/>
    <property type="evidence" value="ECO:0000318"/>
    <property type="project" value="GO_Central"/>
</dbReference>
<dbReference type="GO" id="GO:1902975">
    <property type="term" value="P:mitotic DNA replication initiation"/>
    <property type="evidence" value="ECO:0000318"/>
    <property type="project" value="GO_Central"/>
</dbReference>
<dbReference type="GO" id="GO:0006279">
    <property type="term" value="P:premeiotic DNA replication"/>
    <property type="evidence" value="ECO:0000303"/>
    <property type="project" value="ComplexPortal"/>
</dbReference>
<dbReference type="CDD" id="cd17754">
    <property type="entry name" value="MCM3"/>
    <property type="match status" value="1"/>
</dbReference>
<dbReference type="FunFam" id="2.20.28.10:FF:000006">
    <property type="entry name" value="DNA helicase"/>
    <property type="match status" value="1"/>
</dbReference>
<dbReference type="FunFam" id="3.30.1640.10:FF:000002">
    <property type="entry name" value="DNA helicase"/>
    <property type="match status" value="1"/>
</dbReference>
<dbReference type="Gene3D" id="2.20.28.10">
    <property type="match status" value="1"/>
</dbReference>
<dbReference type="Gene3D" id="3.30.1640.10">
    <property type="entry name" value="mini-chromosome maintenance (MCM) complex, chain A, domain 1"/>
    <property type="match status" value="1"/>
</dbReference>
<dbReference type="Gene3D" id="2.40.50.140">
    <property type="entry name" value="Nucleic acid-binding proteins"/>
    <property type="match status" value="1"/>
</dbReference>
<dbReference type="Gene3D" id="3.40.50.300">
    <property type="entry name" value="P-loop containing nucleotide triphosphate hydrolases"/>
    <property type="match status" value="1"/>
</dbReference>
<dbReference type="InterPro" id="IPR003593">
    <property type="entry name" value="AAA+_ATPase"/>
</dbReference>
<dbReference type="InterPro" id="IPR031327">
    <property type="entry name" value="MCM"/>
</dbReference>
<dbReference type="InterPro" id="IPR008046">
    <property type="entry name" value="Mcm3"/>
</dbReference>
<dbReference type="InterPro" id="IPR018525">
    <property type="entry name" value="MCM_CS"/>
</dbReference>
<dbReference type="InterPro" id="IPR001208">
    <property type="entry name" value="MCM_dom"/>
</dbReference>
<dbReference type="InterPro" id="IPR041562">
    <property type="entry name" value="MCM_lid"/>
</dbReference>
<dbReference type="InterPro" id="IPR027925">
    <property type="entry name" value="MCM_N"/>
</dbReference>
<dbReference type="InterPro" id="IPR033762">
    <property type="entry name" value="MCM_OB"/>
</dbReference>
<dbReference type="InterPro" id="IPR012340">
    <property type="entry name" value="NA-bd_OB-fold"/>
</dbReference>
<dbReference type="InterPro" id="IPR027417">
    <property type="entry name" value="P-loop_NTPase"/>
</dbReference>
<dbReference type="InterPro" id="IPR056575">
    <property type="entry name" value="WH_MCM3_C"/>
</dbReference>
<dbReference type="PANTHER" id="PTHR11630">
    <property type="entry name" value="DNA REPLICATION LICENSING FACTOR MCM FAMILY MEMBER"/>
    <property type="match status" value="1"/>
</dbReference>
<dbReference type="PANTHER" id="PTHR11630:SF46">
    <property type="entry name" value="DNA REPLICATION LICENSING FACTOR MCM3-RELATED"/>
    <property type="match status" value="1"/>
</dbReference>
<dbReference type="Pfam" id="PF00493">
    <property type="entry name" value="MCM"/>
    <property type="match status" value="1"/>
</dbReference>
<dbReference type="Pfam" id="PF17855">
    <property type="entry name" value="MCM_lid"/>
    <property type="match status" value="1"/>
</dbReference>
<dbReference type="Pfam" id="PF14551">
    <property type="entry name" value="MCM_N"/>
    <property type="match status" value="1"/>
</dbReference>
<dbReference type="Pfam" id="PF17207">
    <property type="entry name" value="MCM_OB"/>
    <property type="match status" value="1"/>
</dbReference>
<dbReference type="Pfam" id="PF23191">
    <property type="entry name" value="WH_MCM3_C"/>
    <property type="match status" value="1"/>
</dbReference>
<dbReference type="PRINTS" id="PR01657">
    <property type="entry name" value="MCMFAMILY"/>
</dbReference>
<dbReference type="PRINTS" id="PR01659">
    <property type="entry name" value="MCMPROTEIN3"/>
</dbReference>
<dbReference type="SMART" id="SM00382">
    <property type="entry name" value="AAA"/>
    <property type="match status" value="1"/>
</dbReference>
<dbReference type="SMART" id="SM00350">
    <property type="entry name" value="MCM"/>
    <property type="match status" value="1"/>
</dbReference>
<dbReference type="SUPFAM" id="SSF50249">
    <property type="entry name" value="Nucleic acid-binding proteins"/>
    <property type="match status" value="1"/>
</dbReference>
<dbReference type="SUPFAM" id="SSF52540">
    <property type="entry name" value="P-loop containing nucleoside triphosphate hydrolases"/>
    <property type="match status" value="1"/>
</dbReference>
<dbReference type="PROSITE" id="PS00847">
    <property type="entry name" value="MCM_1"/>
    <property type="match status" value="1"/>
</dbReference>
<dbReference type="PROSITE" id="PS50051">
    <property type="entry name" value="MCM_2"/>
    <property type="match status" value="1"/>
</dbReference>
<feature type="chain" id="PRO_0000406421" description="DNA replication licensing factor Mcm3">
    <location>
        <begin position="1"/>
        <end position="819"/>
    </location>
</feature>
<feature type="domain" description="MCM">
    <location>
        <begin position="290"/>
        <end position="496"/>
    </location>
</feature>
<feature type="region of interest" description="Disordered" evidence="2">
    <location>
        <begin position="655"/>
        <end position="717"/>
    </location>
</feature>
<feature type="short sequence motif" description="Arginine finger">
    <location>
        <begin position="472"/>
        <end position="475"/>
    </location>
</feature>
<feature type="binding site" evidence="1">
    <location>
        <position position="348"/>
    </location>
    <ligand>
        <name>ADP</name>
        <dbReference type="ChEBI" id="CHEBI:456216"/>
        <note>ligand shared with MCM5</note>
    </ligand>
</feature>
<feature type="binding site" evidence="1">
    <location>
        <position position="388"/>
    </location>
    <ligand>
        <name>ADP</name>
        <dbReference type="ChEBI" id="CHEBI:456216"/>
        <note>ligand shared with MCM5</note>
    </ligand>
</feature>
<feature type="binding site" evidence="1">
    <location>
        <position position="389"/>
    </location>
    <ligand>
        <name>ADP</name>
        <dbReference type="ChEBI" id="CHEBI:456216"/>
        <note>ligand shared with MCM5</note>
    </ligand>
</feature>
<feature type="binding site" evidence="1">
    <location>
        <position position="390"/>
    </location>
    <ligand>
        <name>ADP</name>
        <dbReference type="ChEBI" id="CHEBI:456216"/>
        <note>ligand shared with MCM5</note>
    </ligand>
</feature>
<feature type="binding site" evidence="1">
    <location>
        <position position="392"/>
    </location>
    <ligand>
        <name>ADP</name>
        <dbReference type="ChEBI" id="CHEBI:456216"/>
        <note>ligand shared with MCM5</note>
    </ligand>
</feature>
<feature type="modified residue" description="Phosphoserine" evidence="5">
    <location>
        <position position="522"/>
    </location>
</feature>
<feature type="modified residue" description="Phosphotyrosine" evidence="5">
    <location>
        <position position="538"/>
    </location>
</feature>
<feature type="modified residue" description="Phosphoserine" evidence="5">
    <location>
        <position position="664"/>
    </location>
</feature>
<feature type="modified residue" description="Phosphoserine" evidence="5">
    <location>
        <position position="666"/>
    </location>
</feature>
<feature type="modified residue" description="Phosphoserine" evidence="5">
    <location>
        <position position="680"/>
    </location>
</feature>
<feature type="modified residue" description="Phosphoserine" evidence="5">
    <location>
        <position position="682"/>
    </location>
</feature>
<feature type="modified residue" description="Phosphothreonine" evidence="5">
    <location>
        <position position="690"/>
    </location>
</feature>
<feature type="modified residue" description="Phosphothreonine" evidence="5">
    <location>
        <position position="692"/>
    </location>
</feature>
<feature type="modified residue" description="Phosphoserine" evidence="4 5">
    <location>
        <position position="697"/>
    </location>
</feature>
<feature type="modified residue" description="Phosphoserine" evidence="4">
    <location>
        <position position="735"/>
    </location>
</feature>
<feature type="modified residue" description="Phosphoserine" evidence="4">
    <location>
        <position position="739"/>
    </location>
</feature>
<feature type="mutagenesis site" description="Greatly reduces complex helicase activity." evidence="6">
    <original>K</original>
    <variation>A</variation>
    <location>
        <position position="346"/>
    </location>
</feature>
<feature type="sequence conflict" description="In Ref. 1; BAA34731." evidence="7" ref="1">
    <original>S</original>
    <variation>C</variation>
    <location>
        <position position="141"/>
    </location>
</feature>
<feature type="sequence conflict" description="In Ref. 1; BAA34731." evidence="7" ref="1">
    <original>H</original>
    <variation>D</variation>
    <location>
        <position position="193"/>
    </location>
</feature>
<feature type="sequence conflict" description="In Ref. 1; BAA34731." evidence="7" ref="1">
    <original>L</original>
    <variation>Q</variation>
    <location>
        <position position="264"/>
    </location>
</feature>
<feature type="sequence conflict" description="In Ref. 1; BAA34731." evidence="7" ref="1">
    <original>Q</original>
    <variation>L</variation>
    <location>
        <position position="551"/>
    </location>
</feature>
<feature type="sequence conflict" description="In Ref. 1; BAA34731." evidence="7" ref="1">
    <original>V</original>
    <variation>D</variation>
    <location>
        <position position="597"/>
    </location>
</feature>
<feature type="sequence conflict" description="In Ref. 1; BAA34731." evidence="7" ref="1">
    <original>S</original>
    <variation>L</variation>
    <location>
        <position position="720"/>
    </location>
</feature>
<feature type="sequence conflict" description="In Ref. 1; BAA34731." evidence="7" ref="1">
    <original>EI</original>
    <variation>AL</variation>
    <location>
        <begin position="795"/>
        <end position="796"/>
    </location>
</feature>